<sequence>MTQLSLKKIYSGKVRDLYEIDDKRMLMVATDRLSAFDVILDDPIPRKGEILTQISNFWFNQLAHIMPNHFTGDTVYDVLPKEEADKVKDRAVVCKRLTPIKIESIVRGYLTGSGLKDYQKTGTICGLALPEGLVEASKLPEPIFTPSSKAEVGDHDVNISYAECEQLIGPELAAQVKEKAIALYQAAAEYALSKGIIICDTKFEFGLDENGTLTLMDEVLTPDSSRFWSVETYREGINPPSFDKQFIRDWLETSGWNKQPPAPKVPAEVIEKTVNKYQEALDLLTK</sequence>
<feature type="chain" id="PRO_0000100849" description="Phosphoribosylaminoimidazole-succinocarboxamide synthase">
    <location>
        <begin position="1"/>
        <end position="286"/>
    </location>
</feature>
<dbReference type="EC" id="6.3.2.6"/>
<dbReference type="EMBL" id="AE004439">
    <property type="protein sequence ID" value="AAK02899.1"/>
    <property type="molecule type" value="Genomic_DNA"/>
</dbReference>
<dbReference type="RefSeq" id="WP_010906862.1">
    <property type="nucleotide sequence ID" value="NC_002663.1"/>
</dbReference>
<dbReference type="SMR" id="P57878"/>
<dbReference type="STRING" id="272843.PM0815"/>
<dbReference type="EnsemblBacteria" id="AAK02899">
    <property type="protein sequence ID" value="AAK02899"/>
    <property type="gene ID" value="PM0815"/>
</dbReference>
<dbReference type="KEGG" id="pmu:PM0815"/>
<dbReference type="PATRIC" id="fig|272843.6.peg.824"/>
<dbReference type="HOGENOM" id="CLU_045637_0_2_6"/>
<dbReference type="OrthoDB" id="9801549at2"/>
<dbReference type="UniPathway" id="UPA00074">
    <property type="reaction ID" value="UER00131"/>
</dbReference>
<dbReference type="Proteomes" id="UP000000809">
    <property type="component" value="Chromosome"/>
</dbReference>
<dbReference type="GO" id="GO:0005737">
    <property type="term" value="C:cytoplasm"/>
    <property type="evidence" value="ECO:0007669"/>
    <property type="project" value="TreeGrafter"/>
</dbReference>
<dbReference type="GO" id="GO:0005524">
    <property type="term" value="F:ATP binding"/>
    <property type="evidence" value="ECO:0007669"/>
    <property type="project" value="UniProtKB-KW"/>
</dbReference>
<dbReference type="GO" id="GO:0004639">
    <property type="term" value="F:phosphoribosylaminoimidazolesuccinocarboxamide synthase activity"/>
    <property type="evidence" value="ECO:0007669"/>
    <property type="project" value="UniProtKB-UniRule"/>
</dbReference>
<dbReference type="GO" id="GO:0006189">
    <property type="term" value="P:'de novo' IMP biosynthetic process"/>
    <property type="evidence" value="ECO:0007669"/>
    <property type="project" value="UniProtKB-UniRule"/>
</dbReference>
<dbReference type="CDD" id="cd01414">
    <property type="entry name" value="SAICAR_synt_Sc"/>
    <property type="match status" value="1"/>
</dbReference>
<dbReference type="FunFam" id="3.30.200.20:FF:000365">
    <property type="entry name" value="Phosphoribosylaminoimidazole-succinocarboxamide synthase"/>
    <property type="match status" value="1"/>
</dbReference>
<dbReference type="FunFam" id="3.30.470.20:FF:000015">
    <property type="entry name" value="Phosphoribosylaminoimidazole-succinocarboxamide synthase"/>
    <property type="match status" value="1"/>
</dbReference>
<dbReference type="Gene3D" id="3.30.470.20">
    <property type="entry name" value="ATP-grasp fold, B domain"/>
    <property type="match status" value="1"/>
</dbReference>
<dbReference type="Gene3D" id="3.30.200.20">
    <property type="entry name" value="Phosphorylase Kinase, domain 1"/>
    <property type="match status" value="1"/>
</dbReference>
<dbReference type="HAMAP" id="MF_00137">
    <property type="entry name" value="SAICAR_synth"/>
    <property type="match status" value="1"/>
</dbReference>
<dbReference type="InterPro" id="IPR028923">
    <property type="entry name" value="SAICAR_synt/ADE2_N"/>
</dbReference>
<dbReference type="InterPro" id="IPR001636">
    <property type="entry name" value="SAICAR_synth"/>
</dbReference>
<dbReference type="InterPro" id="IPR018236">
    <property type="entry name" value="SAICAR_synthetase_CS"/>
</dbReference>
<dbReference type="NCBIfam" id="NF010568">
    <property type="entry name" value="PRK13961.1"/>
    <property type="match status" value="1"/>
</dbReference>
<dbReference type="NCBIfam" id="TIGR00081">
    <property type="entry name" value="purC"/>
    <property type="match status" value="1"/>
</dbReference>
<dbReference type="PANTHER" id="PTHR43700">
    <property type="entry name" value="PHOSPHORIBOSYLAMINOIMIDAZOLE-SUCCINOCARBOXAMIDE SYNTHASE"/>
    <property type="match status" value="1"/>
</dbReference>
<dbReference type="PANTHER" id="PTHR43700:SF1">
    <property type="entry name" value="PHOSPHORIBOSYLAMINOIMIDAZOLE-SUCCINOCARBOXAMIDE SYNTHASE"/>
    <property type="match status" value="1"/>
</dbReference>
<dbReference type="Pfam" id="PF01259">
    <property type="entry name" value="SAICAR_synt"/>
    <property type="match status" value="1"/>
</dbReference>
<dbReference type="SUPFAM" id="SSF56104">
    <property type="entry name" value="SAICAR synthase-like"/>
    <property type="match status" value="1"/>
</dbReference>
<dbReference type="PROSITE" id="PS01057">
    <property type="entry name" value="SAICAR_SYNTHETASE_1"/>
    <property type="match status" value="1"/>
</dbReference>
<dbReference type="PROSITE" id="PS01058">
    <property type="entry name" value="SAICAR_SYNTHETASE_2"/>
    <property type="match status" value="1"/>
</dbReference>
<accession>P57878</accession>
<organism>
    <name type="scientific">Pasteurella multocida (strain Pm70)</name>
    <dbReference type="NCBI Taxonomy" id="272843"/>
    <lineage>
        <taxon>Bacteria</taxon>
        <taxon>Pseudomonadati</taxon>
        <taxon>Pseudomonadota</taxon>
        <taxon>Gammaproteobacteria</taxon>
        <taxon>Pasteurellales</taxon>
        <taxon>Pasteurellaceae</taxon>
        <taxon>Pasteurella</taxon>
    </lineage>
</organism>
<name>PUR7_PASMU</name>
<keyword id="KW-0067">ATP-binding</keyword>
<keyword id="KW-0436">Ligase</keyword>
<keyword id="KW-0547">Nucleotide-binding</keyword>
<keyword id="KW-0658">Purine biosynthesis</keyword>
<keyword id="KW-1185">Reference proteome</keyword>
<protein>
    <recommendedName>
        <fullName>Phosphoribosylaminoimidazole-succinocarboxamide synthase</fullName>
        <ecNumber>6.3.2.6</ecNumber>
    </recommendedName>
    <alternativeName>
        <fullName>SAICAR synthetase</fullName>
    </alternativeName>
</protein>
<evidence type="ECO:0000305" key="1"/>
<comment type="catalytic activity">
    <reaction>
        <text>5-amino-1-(5-phospho-D-ribosyl)imidazole-4-carboxylate + L-aspartate + ATP = (2S)-2-[5-amino-1-(5-phospho-beta-D-ribosyl)imidazole-4-carboxamido]succinate + ADP + phosphate + 2 H(+)</text>
        <dbReference type="Rhea" id="RHEA:22628"/>
        <dbReference type="ChEBI" id="CHEBI:15378"/>
        <dbReference type="ChEBI" id="CHEBI:29991"/>
        <dbReference type="ChEBI" id="CHEBI:30616"/>
        <dbReference type="ChEBI" id="CHEBI:43474"/>
        <dbReference type="ChEBI" id="CHEBI:58443"/>
        <dbReference type="ChEBI" id="CHEBI:77657"/>
        <dbReference type="ChEBI" id="CHEBI:456216"/>
        <dbReference type="EC" id="6.3.2.6"/>
    </reaction>
</comment>
<comment type="pathway">
    <text>Purine metabolism; IMP biosynthesis via de novo pathway; 5-amino-1-(5-phospho-D-ribosyl)imidazole-4-carboxamide from 5-amino-1-(5-phospho-D-ribosyl)imidazole-4-carboxylate: step 1/2.</text>
</comment>
<comment type="similarity">
    <text evidence="1">Belongs to the SAICAR synthetase family.</text>
</comment>
<gene>
    <name type="primary">purC</name>
    <name type="ordered locus">PM0815</name>
</gene>
<reference key="1">
    <citation type="journal article" date="2001" name="Proc. Natl. Acad. Sci. U.S.A.">
        <title>Complete genomic sequence of Pasteurella multocida Pm70.</title>
        <authorList>
            <person name="May B.J."/>
            <person name="Zhang Q."/>
            <person name="Li L.L."/>
            <person name="Paustian M.L."/>
            <person name="Whittam T.S."/>
            <person name="Kapur V."/>
        </authorList>
    </citation>
    <scope>NUCLEOTIDE SEQUENCE [LARGE SCALE GENOMIC DNA]</scope>
    <source>
        <strain>Pm70</strain>
    </source>
</reference>
<proteinExistence type="inferred from homology"/>